<feature type="chain" id="PRO_1000088398" description="RNA polymerase-associated protein RapA">
    <location>
        <begin position="1"/>
        <end position="969"/>
    </location>
</feature>
<feature type="domain" description="Helicase ATP-binding" evidence="1">
    <location>
        <begin position="164"/>
        <end position="334"/>
    </location>
</feature>
<feature type="domain" description="Helicase C-terminal" evidence="1">
    <location>
        <begin position="492"/>
        <end position="646"/>
    </location>
</feature>
<feature type="short sequence motif" description="DEAH box">
    <location>
        <begin position="280"/>
        <end position="283"/>
    </location>
</feature>
<feature type="binding site" evidence="1">
    <location>
        <begin position="177"/>
        <end position="184"/>
    </location>
    <ligand>
        <name>ATP</name>
        <dbReference type="ChEBI" id="CHEBI:30616"/>
    </ligand>
</feature>
<keyword id="KW-0010">Activator</keyword>
<keyword id="KW-0067">ATP-binding</keyword>
<keyword id="KW-0238">DNA-binding</keyword>
<keyword id="KW-0347">Helicase</keyword>
<keyword id="KW-0378">Hydrolase</keyword>
<keyword id="KW-0547">Nucleotide-binding</keyword>
<keyword id="KW-0804">Transcription</keyword>
<keyword id="KW-0805">Transcription regulation</keyword>
<proteinExistence type="inferred from homology"/>
<dbReference type="EC" id="3.6.4.-" evidence="1"/>
<dbReference type="EMBL" id="CP000789">
    <property type="protein sequence ID" value="ABU72590.1"/>
    <property type="molecule type" value="Genomic_DNA"/>
</dbReference>
<dbReference type="RefSeq" id="WP_012128985.1">
    <property type="nucleotide sequence ID" value="NC_009783.1"/>
</dbReference>
<dbReference type="SMR" id="A7MSB2"/>
<dbReference type="KEGG" id="vha:VIBHAR_03676"/>
<dbReference type="PATRIC" id="fig|338187.25.peg.2559"/>
<dbReference type="Proteomes" id="UP000008152">
    <property type="component" value="Chromosome I"/>
</dbReference>
<dbReference type="GO" id="GO:0005524">
    <property type="term" value="F:ATP binding"/>
    <property type="evidence" value="ECO:0007669"/>
    <property type="project" value="UniProtKB-UniRule"/>
</dbReference>
<dbReference type="GO" id="GO:0003677">
    <property type="term" value="F:DNA binding"/>
    <property type="evidence" value="ECO:0007669"/>
    <property type="project" value="UniProtKB-KW"/>
</dbReference>
<dbReference type="GO" id="GO:0004386">
    <property type="term" value="F:helicase activity"/>
    <property type="evidence" value="ECO:0007669"/>
    <property type="project" value="UniProtKB-UniRule"/>
</dbReference>
<dbReference type="GO" id="GO:0016817">
    <property type="term" value="F:hydrolase activity, acting on acid anhydrides"/>
    <property type="evidence" value="ECO:0007669"/>
    <property type="project" value="InterPro"/>
</dbReference>
<dbReference type="GO" id="GO:0006355">
    <property type="term" value="P:regulation of DNA-templated transcription"/>
    <property type="evidence" value="ECO:0007669"/>
    <property type="project" value="UniProtKB-UniRule"/>
</dbReference>
<dbReference type="CDD" id="cd18011">
    <property type="entry name" value="DEXDc_RapA"/>
    <property type="match status" value="1"/>
</dbReference>
<dbReference type="CDD" id="cd18793">
    <property type="entry name" value="SF2_C_SNF"/>
    <property type="match status" value="1"/>
</dbReference>
<dbReference type="FunFam" id="3.40.50.10810:FF:000012">
    <property type="entry name" value="RNA polymerase-associated protein RapA"/>
    <property type="match status" value="1"/>
</dbReference>
<dbReference type="Gene3D" id="2.30.30.140">
    <property type="match status" value="1"/>
</dbReference>
<dbReference type="Gene3D" id="2.30.30.930">
    <property type="match status" value="1"/>
</dbReference>
<dbReference type="Gene3D" id="3.30.360.80">
    <property type="match status" value="1"/>
</dbReference>
<dbReference type="Gene3D" id="6.10.140.1500">
    <property type="match status" value="1"/>
</dbReference>
<dbReference type="Gene3D" id="6.10.140.2230">
    <property type="match status" value="1"/>
</dbReference>
<dbReference type="Gene3D" id="3.40.50.300">
    <property type="entry name" value="P-loop containing nucleotide triphosphate hydrolases"/>
    <property type="match status" value="1"/>
</dbReference>
<dbReference type="Gene3D" id="3.40.50.10810">
    <property type="entry name" value="Tandem AAA-ATPase domain"/>
    <property type="match status" value="1"/>
</dbReference>
<dbReference type="HAMAP" id="MF_01821">
    <property type="entry name" value="Helicase_RapA"/>
    <property type="match status" value="1"/>
</dbReference>
<dbReference type="InterPro" id="IPR014001">
    <property type="entry name" value="Helicase_ATP-bd"/>
</dbReference>
<dbReference type="InterPro" id="IPR001650">
    <property type="entry name" value="Helicase_C-like"/>
</dbReference>
<dbReference type="InterPro" id="IPR023949">
    <property type="entry name" value="Helicase_RapA"/>
</dbReference>
<dbReference type="InterPro" id="IPR027417">
    <property type="entry name" value="P-loop_NTPase"/>
</dbReference>
<dbReference type="InterPro" id="IPR022737">
    <property type="entry name" value="RapA_C"/>
</dbReference>
<dbReference type="InterPro" id="IPR038718">
    <property type="entry name" value="SNF2-like_sf"/>
</dbReference>
<dbReference type="InterPro" id="IPR049730">
    <property type="entry name" value="SNF2/RAD54-like_C"/>
</dbReference>
<dbReference type="InterPro" id="IPR000330">
    <property type="entry name" value="SNF2_N"/>
</dbReference>
<dbReference type="InterPro" id="IPR040765">
    <property type="entry name" value="Tudor_1_RapA"/>
</dbReference>
<dbReference type="InterPro" id="IPR040766">
    <property type="entry name" value="Tudor_2_RapA"/>
</dbReference>
<dbReference type="NCBIfam" id="NF003426">
    <property type="entry name" value="PRK04914.1"/>
    <property type="match status" value="1"/>
</dbReference>
<dbReference type="PANTHER" id="PTHR45766">
    <property type="entry name" value="DNA ANNEALING HELICASE AND ENDONUCLEASE ZRANB3 FAMILY MEMBER"/>
    <property type="match status" value="1"/>
</dbReference>
<dbReference type="PANTHER" id="PTHR45766:SF6">
    <property type="entry name" value="SWI_SNF-RELATED MATRIX-ASSOCIATED ACTIN-DEPENDENT REGULATOR OF CHROMATIN SUBFAMILY A-LIKE PROTEIN 1"/>
    <property type="match status" value="1"/>
</dbReference>
<dbReference type="Pfam" id="PF00271">
    <property type="entry name" value="Helicase_C"/>
    <property type="match status" value="1"/>
</dbReference>
<dbReference type="Pfam" id="PF12137">
    <property type="entry name" value="RapA_C"/>
    <property type="match status" value="1"/>
</dbReference>
<dbReference type="Pfam" id="PF00176">
    <property type="entry name" value="SNF2-rel_dom"/>
    <property type="match status" value="1"/>
</dbReference>
<dbReference type="Pfam" id="PF18339">
    <property type="entry name" value="Tudor_1_RapA"/>
    <property type="match status" value="1"/>
</dbReference>
<dbReference type="Pfam" id="PF18337">
    <property type="entry name" value="Tudor_RapA"/>
    <property type="match status" value="1"/>
</dbReference>
<dbReference type="SMART" id="SM00487">
    <property type="entry name" value="DEXDc"/>
    <property type="match status" value="1"/>
</dbReference>
<dbReference type="SMART" id="SM00490">
    <property type="entry name" value="HELICc"/>
    <property type="match status" value="1"/>
</dbReference>
<dbReference type="SUPFAM" id="SSF52540">
    <property type="entry name" value="P-loop containing nucleoside triphosphate hydrolases"/>
    <property type="match status" value="2"/>
</dbReference>
<dbReference type="PROSITE" id="PS51192">
    <property type="entry name" value="HELICASE_ATP_BIND_1"/>
    <property type="match status" value="1"/>
</dbReference>
<dbReference type="PROSITE" id="PS51194">
    <property type="entry name" value="HELICASE_CTER"/>
    <property type="match status" value="1"/>
</dbReference>
<organism>
    <name type="scientific">Vibrio campbellii (strain ATCC BAA-1116)</name>
    <dbReference type="NCBI Taxonomy" id="2902295"/>
    <lineage>
        <taxon>Bacteria</taxon>
        <taxon>Pseudomonadati</taxon>
        <taxon>Pseudomonadota</taxon>
        <taxon>Gammaproteobacteria</taxon>
        <taxon>Vibrionales</taxon>
        <taxon>Vibrionaceae</taxon>
        <taxon>Vibrio</taxon>
    </lineage>
</organism>
<gene>
    <name evidence="1" type="primary">rapA</name>
    <name type="ordered locus">VIBHAR_03676</name>
</gene>
<comment type="function">
    <text evidence="1">Transcription regulator that activates transcription by stimulating RNA polymerase (RNAP) recycling in case of stress conditions such as supercoiled DNA or high salt concentrations. Probably acts by releasing the RNAP, when it is trapped or immobilized on tightly supercoiled DNA. Does not activate transcription on linear DNA. Probably not involved in DNA repair.</text>
</comment>
<comment type="subunit">
    <text evidence="1">Interacts with the RNAP. Has a higher affinity for the core RNAP than for the holoenzyme. Its ATPase activity is stimulated by binding to RNAP.</text>
</comment>
<comment type="similarity">
    <text evidence="1">Belongs to the SNF2/RAD54 helicase family. RapA subfamily.</text>
</comment>
<reference key="1">
    <citation type="submission" date="2007-08" db="EMBL/GenBank/DDBJ databases">
        <authorList>
            <consortium name="The Vibrio harveyi Genome Sequencing Project"/>
            <person name="Bassler B."/>
            <person name="Clifton S.W."/>
            <person name="Fulton L."/>
            <person name="Delehaunty K."/>
            <person name="Fronick C."/>
            <person name="Harrison M."/>
            <person name="Markivic C."/>
            <person name="Fulton R."/>
            <person name="Tin-Wollam A.-M."/>
            <person name="Shah N."/>
            <person name="Pepin K."/>
            <person name="Nash W."/>
            <person name="Thiruvilangam P."/>
            <person name="Bhonagiri V."/>
            <person name="Waters C."/>
            <person name="Tu K.C."/>
            <person name="Irgon J."/>
            <person name="Wilson R.K."/>
        </authorList>
    </citation>
    <scope>NUCLEOTIDE SEQUENCE [LARGE SCALE GENOMIC DNA]</scope>
    <source>
        <strain>ATCC BAA-1116 / BB120</strain>
    </source>
</reference>
<evidence type="ECO:0000255" key="1">
    <source>
        <dbReference type="HAMAP-Rule" id="MF_01821"/>
    </source>
</evidence>
<name>RAPA_VIBC1</name>
<sequence length="969" mass="110001">MTFALGQRWISDTESDLGLGTVVAMDARTVTLMFAASEENRVYARNDAPVTRVTFNVGDVIDCQEGWSLKVEEVLEDEGLYTYFGTREDTQETAIVLREIFLSNHIRFNKPQDKLYAGQIDRMDNFVLRYRALQNQFEQHKSPMRGLCGMRAGLIPHQLYIAHEVGRRHAPRVLLADEVGLGKTIEAGMIIHQQVLSGRAERILIVVPETLQHQWLVEMMRRFNLHFSIFDEERCIEAFAEAENPFDTQQYVLCSLDFLRKSRKRFEQALEGEWDLLVVDEAHHLEWSQDKPSREYQVVEGLAERTAGVLLLTATPEQLGRESHFARLRLLDPDRFYDYDAFVEEEEQYAPVADAITSLFSGEKLPDEAKNQITELLSEQDVEPLFRIIESDSDEEAKASARQELIDNLMDRHGTGRVLFRNTRAAIKGFPKRNVHLMPMDIPQQYTTSMRVSGMIGGKMTPEARAVKNLYPEEIFQEFEGEDSSWWQFDSRVNWLLEKVKEKRSDKVLVIASRASTALQLEQALREREGIRATVFHEGMSILERDKAAAYFAQEEGGAQVLICSEIGSEGRNFQFANQLVMFDLPFNPDLLEQRIGRLDRIGQKRDIDIHVPYLKDTSQAILARWFDEGLNAFAETCPTGRAVYDKYSDALIEMLASGDVSNLDEVIEESAKMNKELKSQLEQGRDRLLEMHSNGGEKAQQIVEKISSTDGDTNLVTFALSLFDTIGLNQDDKGENALVVTPSEHMMVPSYPGLPYEGATITFDRDTALSREDMHFISWEHPMIQGGIDLLMSEGVGTSAVSLLKNKALPVGTILLELVYAVDAQAPKRSGITRFLPKTPIRMMMDARGNDLSPQVEFEGFNRQLSPVNRHLGSKLVTSVQKDIHSLIEAGDALVEQKVEEVRKQAHQDMQQSLNAELERLQALKAVNPNIRDEEIESIEEQIKELTGYINQAQVQLDSLRLIVVSHN</sequence>
<protein>
    <recommendedName>
        <fullName evidence="1">RNA polymerase-associated protein RapA</fullName>
        <ecNumber evidence="1">3.6.4.-</ecNumber>
    </recommendedName>
    <alternativeName>
        <fullName evidence="1">ATP-dependent helicase HepA</fullName>
    </alternativeName>
</protein>
<accession>A7MSB2</accession>